<name>BMN_BOMVA</name>
<comment type="function">
    <text>Has antimicrobial and hemolytic activities.</text>
</comment>
<comment type="subcellular location">
    <subcellularLocation>
        <location>Secreted</location>
    </subcellularLocation>
</comment>
<comment type="tissue specificity">
    <text>Expressed by the skin glands.</text>
</comment>
<comment type="similarity">
    <text evidence="2">Belongs to the bombinin family.</text>
</comment>
<comment type="caution">
    <text evidence="2">Residue 20 is assigned as E by similarity to other bombin sequences instead of Z (Glutamic acid or Gutamine) given in the original sequence by the authors.</text>
</comment>
<accession>P01505</accession>
<sequence length="24" mass="2295">GIGALSAKGALKGLAKGLAEHFAN</sequence>
<proteinExistence type="evidence at protein level"/>
<keyword id="KW-0027">Amidation</keyword>
<keyword id="KW-0878">Amphibian defense peptide</keyword>
<keyword id="KW-0044">Antibiotic</keyword>
<keyword id="KW-0929">Antimicrobial</keyword>
<keyword id="KW-0204">Cytolysis</keyword>
<keyword id="KW-0903">Direct protein sequencing</keyword>
<keyword id="KW-0354">Hemolysis</keyword>
<keyword id="KW-0964">Secreted</keyword>
<dbReference type="PIR" id="A01766">
    <property type="entry name" value="BMTD"/>
</dbReference>
<dbReference type="GO" id="GO:0005576">
    <property type="term" value="C:extracellular region"/>
    <property type="evidence" value="ECO:0007669"/>
    <property type="project" value="UniProtKB-SubCell"/>
</dbReference>
<dbReference type="GO" id="GO:0042742">
    <property type="term" value="P:defense response to bacterium"/>
    <property type="evidence" value="ECO:0007669"/>
    <property type="project" value="UniProtKB-KW"/>
</dbReference>
<dbReference type="GO" id="GO:0031640">
    <property type="term" value="P:killing of cells of another organism"/>
    <property type="evidence" value="ECO:0007669"/>
    <property type="project" value="UniProtKB-KW"/>
</dbReference>
<organism>
    <name type="scientific">Bombina variegata</name>
    <name type="common">Yellow-bellied toad</name>
    <dbReference type="NCBI Taxonomy" id="8348"/>
    <lineage>
        <taxon>Eukaryota</taxon>
        <taxon>Metazoa</taxon>
        <taxon>Chordata</taxon>
        <taxon>Craniata</taxon>
        <taxon>Vertebrata</taxon>
        <taxon>Euteleostomi</taxon>
        <taxon>Amphibia</taxon>
        <taxon>Batrachia</taxon>
        <taxon>Anura</taxon>
        <taxon>Bombinatoridae</taxon>
        <taxon>Bombina</taxon>
    </lineage>
</organism>
<feature type="peptide" id="PRO_0000043500" description="Bombinin">
    <location>
        <begin position="1"/>
        <end position="24"/>
    </location>
</feature>
<feature type="modified residue" description="Asparagine amide" evidence="1">
    <location>
        <position position="24"/>
    </location>
</feature>
<protein>
    <recommendedName>
        <fullName>Bombinin</fullName>
    </recommendedName>
</protein>
<evidence type="ECO:0000269" key="1">
    <source ref="1"/>
</evidence>
<evidence type="ECO:0000305" key="2"/>
<reference key="1">
    <citation type="journal article" date="1970" name="Monatsh. Chem.">
        <title>Isolation and structural resolution of a haemolytically active polypeptide from the immune secretion of a European toad.</title>
        <authorList>
            <person name="Csordas A."/>
            <person name="Michl H."/>
        </authorList>
    </citation>
    <scope>PROTEIN SEQUENCE</scope>
    <scope>AMIDATION AT ASN-24</scope>
    <source>
        <tissue>Skin secretion</tissue>
    </source>
</reference>